<proteinExistence type="inferred from homology"/>
<comment type="function">
    <text evidence="1">Catalyzes the attachment of isoleucine to tRNA(Ile). As IleRS can inadvertently accommodate and process structurally similar amino acids such as valine, to avoid such errors it has two additional distinct tRNA(Ile)-dependent editing activities. One activity is designated as 'pretransfer' editing and involves the hydrolysis of activated Val-AMP. The other activity is designated 'posttransfer' editing and involves deacylation of mischarged Val-tRNA(Ile).</text>
</comment>
<comment type="catalytic activity">
    <reaction evidence="1">
        <text>tRNA(Ile) + L-isoleucine + ATP = L-isoleucyl-tRNA(Ile) + AMP + diphosphate</text>
        <dbReference type="Rhea" id="RHEA:11060"/>
        <dbReference type="Rhea" id="RHEA-COMP:9666"/>
        <dbReference type="Rhea" id="RHEA-COMP:9695"/>
        <dbReference type="ChEBI" id="CHEBI:30616"/>
        <dbReference type="ChEBI" id="CHEBI:33019"/>
        <dbReference type="ChEBI" id="CHEBI:58045"/>
        <dbReference type="ChEBI" id="CHEBI:78442"/>
        <dbReference type="ChEBI" id="CHEBI:78528"/>
        <dbReference type="ChEBI" id="CHEBI:456215"/>
        <dbReference type="EC" id="6.1.1.5"/>
    </reaction>
</comment>
<comment type="cofactor">
    <cofactor evidence="1">
        <name>Zn(2+)</name>
        <dbReference type="ChEBI" id="CHEBI:29105"/>
    </cofactor>
    <text evidence="1">Binds 1 zinc ion per subunit.</text>
</comment>
<comment type="subunit">
    <text evidence="1">Monomer.</text>
</comment>
<comment type="subcellular location">
    <subcellularLocation>
        <location evidence="1">Cytoplasm</location>
    </subcellularLocation>
</comment>
<comment type="domain">
    <text evidence="1">IleRS has two distinct active sites: one for aminoacylation and one for editing. The misactivated valine is translocated from the active site to the editing site, which sterically excludes the correctly activated isoleucine. The single editing site contains two valyl binding pockets, one specific for each substrate (Val-AMP or Val-tRNA(Ile)).</text>
</comment>
<comment type="similarity">
    <text evidence="1">Belongs to the class-I aminoacyl-tRNA synthetase family. IleS type 1 subfamily.</text>
</comment>
<accession>A7HMY6</accession>
<organism>
    <name type="scientific">Fervidobacterium nodosum (strain ATCC 35602 / DSM 5306 / Rt17-B1)</name>
    <dbReference type="NCBI Taxonomy" id="381764"/>
    <lineage>
        <taxon>Bacteria</taxon>
        <taxon>Thermotogati</taxon>
        <taxon>Thermotogota</taxon>
        <taxon>Thermotogae</taxon>
        <taxon>Thermotogales</taxon>
        <taxon>Fervidobacteriaceae</taxon>
        <taxon>Fervidobacterium</taxon>
    </lineage>
</organism>
<name>SYI_FERNB</name>
<evidence type="ECO:0000255" key="1">
    <source>
        <dbReference type="HAMAP-Rule" id="MF_02002"/>
    </source>
</evidence>
<gene>
    <name evidence="1" type="primary">ileS</name>
    <name type="ordered locus">Fnod_1425</name>
</gene>
<feature type="chain" id="PRO_1000073709" description="Isoleucine--tRNA ligase">
    <location>
        <begin position="1"/>
        <end position="913"/>
    </location>
</feature>
<feature type="short sequence motif" description="'HIGH' region">
    <location>
        <begin position="57"/>
        <end position="67"/>
    </location>
</feature>
<feature type="short sequence motif" description="'KMSKS' region">
    <location>
        <begin position="590"/>
        <end position="594"/>
    </location>
</feature>
<feature type="binding site" evidence="1">
    <location>
        <position position="549"/>
    </location>
    <ligand>
        <name>L-isoleucyl-5'-AMP</name>
        <dbReference type="ChEBI" id="CHEBI:178002"/>
    </ligand>
</feature>
<feature type="binding site" evidence="1">
    <location>
        <position position="593"/>
    </location>
    <ligand>
        <name>ATP</name>
        <dbReference type="ChEBI" id="CHEBI:30616"/>
    </ligand>
</feature>
<feature type="binding site" evidence="1">
    <location>
        <position position="881"/>
    </location>
    <ligand>
        <name>Zn(2+)</name>
        <dbReference type="ChEBI" id="CHEBI:29105"/>
    </ligand>
</feature>
<feature type="binding site" evidence="1">
    <location>
        <position position="884"/>
    </location>
    <ligand>
        <name>Zn(2+)</name>
        <dbReference type="ChEBI" id="CHEBI:29105"/>
    </ligand>
</feature>
<feature type="binding site" evidence="1">
    <location>
        <position position="901"/>
    </location>
    <ligand>
        <name>Zn(2+)</name>
        <dbReference type="ChEBI" id="CHEBI:29105"/>
    </ligand>
</feature>
<feature type="binding site" evidence="1">
    <location>
        <position position="904"/>
    </location>
    <ligand>
        <name>Zn(2+)</name>
        <dbReference type="ChEBI" id="CHEBI:29105"/>
    </ligand>
</feature>
<reference key="1">
    <citation type="submission" date="2007-07" db="EMBL/GenBank/DDBJ databases">
        <title>Complete sequence of Fervidobacterium nodosum Rt17-B1.</title>
        <authorList>
            <consortium name="US DOE Joint Genome Institute"/>
            <person name="Copeland A."/>
            <person name="Lucas S."/>
            <person name="Lapidus A."/>
            <person name="Barry K."/>
            <person name="Glavina del Rio T."/>
            <person name="Dalin E."/>
            <person name="Tice H."/>
            <person name="Pitluck S."/>
            <person name="Saunders E."/>
            <person name="Brettin T."/>
            <person name="Bruce D."/>
            <person name="Detter J.C."/>
            <person name="Han C."/>
            <person name="Schmutz J."/>
            <person name="Larimer F."/>
            <person name="Land M."/>
            <person name="Hauser L."/>
            <person name="Kyrpides N."/>
            <person name="Mikhailova N."/>
            <person name="Nelson K."/>
            <person name="Gogarten J.P."/>
            <person name="Noll K."/>
            <person name="Richardson P."/>
        </authorList>
    </citation>
    <scope>NUCLEOTIDE SEQUENCE [LARGE SCALE GENOMIC DNA]</scope>
    <source>
        <strain>ATCC 35602 / DSM 5306 / Rt17-B1</strain>
    </source>
</reference>
<sequence length="913" mass="105673">MDYKETLNLPQTNFQMKANLVQKEPNMLKYWEEKEIYKKTLETREGAPTYLLHDGPPYANGDIHLGTAMNKILKDFVTRYKTMRGYRVPYVPGWDTHGLPIEHRVTTTLGEEAKKKSPVEIRKLCKEFALKYVDIQREEFKRLGVKGDWEHPYITLTPDYEYHILDVFKTLVENGNVYRGNKPVYWCPTCRTALAEAEIEYHDHESPSIYVKFQMVDQPDTYVVIWTTTPWTIPANVAIALHPEYEYLKIKVGNEYWIVADGLLQKFASETGIEFQVTEKFLGKTLEGKLTKHPLYDRTSVIVLADYVTLEDGTGCVHTAPGHGEEDYQTGLKYNLPILSPVDDEGKFTKEAGKYEGLKIWDANKVVVEDLEKAGALIKFGKISHSYPHCWRCKGPVMFRATPQWFISVNKNNLRGKVLEQIKKVKWYPSWGENRITAMVQERPDWTISRQRVWGVPIPAVKCKSCDEVTLDPKVIEHFANIVKEKGTDAWFELDIKELIPSDFSCPKCGSKEFEKTYDTLDVWIDSGCSWEAVIRSKGEKFPVDLYLEGDDQHRGWFQSSIFLATAKTGNAPFKTVVTHGFIKDEQGRKMSKSLGNVIDPMEIVNKYGADILRLWVASTDFFDNIRVGKNIIEQQVEVYRKLRNTLRYLLSNLYDFTENDILPYEKLLPLDKWALGRLQKYIEQVTQYYEEFEYSKVYNATVKYCTTELSSIYLDILKDRLYVEAKDSIYRRSAQTVLYYILEALIKILAPIMPFTAEEAYQESPLKKYESVHLENWPEVRKEFINENLLEEFQQLLLVRDDVLKALENARSSDVIGHSLDAHVKIEPKNSEIGQLLEKYADMLEDFFIVSKVSILNELSDGINGQLVTVLVEHAEGQKCQRCWKYHPDTGKDENHPETCPRCSAVLRGERK</sequence>
<protein>
    <recommendedName>
        <fullName evidence="1">Isoleucine--tRNA ligase</fullName>
        <ecNumber evidence="1">6.1.1.5</ecNumber>
    </recommendedName>
    <alternativeName>
        <fullName evidence="1">Isoleucyl-tRNA synthetase</fullName>
        <shortName evidence="1">IleRS</shortName>
    </alternativeName>
</protein>
<dbReference type="EC" id="6.1.1.5" evidence="1"/>
<dbReference type="EMBL" id="CP000771">
    <property type="protein sequence ID" value="ABS61269.1"/>
    <property type="molecule type" value="Genomic_DNA"/>
</dbReference>
<dbReference type="RefSeq" id="WP_011994575.1">
    <property type="nucleotide sequence ID" value="NC_009718.1"/>
</dbReference>
<dbReference type="SMR" id="A7HMY6"/>
<dbReference type="STRING" id="381764.Fnod_1425"/>
<dbReference type="KEGG" id="fno:Fnod_1425"/>
<dbReference type="eggNOG" id="COG0060">
    <property type="taxonomic scope" value="Bacteria"/>
</dbReference>
<dbReference type="HOGENOM" id="CLU_001493_7_0_0"/>
<dbReference type="OrthoDB" id="9810365at2"/>
<dbReference type="Proteomes" id="UP000002415">
    <property type="component" value="Chromosome"/>
</dbReference>
<dbReference type="GO" id="GO:0005829">
    <property type="term" value="C:cytosol"/>
    <property type="evidence" value="ECO:0007669"/>
    <property type="project" value="TreeGrafter"/>
</dbReference>
<dbReference type="GO" id="GO:0002161">
    <property type="term" value="F:aminoacyl-tRNA deacylase activity"/>
    <property type="evidence" value="ECO:0007669"/>
    <property type="project" value="InterPro"/>
</dbReference>
<dbReference type="GO" id="GO:0005524">
    <property type="term" value="F:ATP binding"/>
    <property type="evidence" value="ECO:0007669"/>
    <property type="project" value="UniProtKB-UniRule"/>
</dbReference>
<dbReference type="GO" id="GO:0004822">
    <property type="term" value="F:isoleucine-tRNA ligase activity"/>
    <property type="evidence" value="ECO:0007669"/>
    <property type="project" value="UniProtKB-UniRule"/>
</dbReference>
<dbReference type="GO" id="GO:0000049">
    <property type="term" value="F:tRNA binding"/>
    <property type="evidence" value="ECO:0007669"/>
    <property type="project" value="InterPro"/>
</dbReference>
<dbReference type="GO" id="GO:0008270">
    <property type="term" value="F:zinc ion binding"/>
    <property type="evidence" value="ECO:0007669"/>
    <property type="project" value="UniProtKB-UniRule"/>
</dbReference>
<dbReference type="GO" id="GO:0006428">
    <property type="term" value="P:isoleucyl-tRNA aminoacylation"/>
    <property type="evidence" value="ECO:0007669"/>
    <property type="project" value="UniProtKB-UniRule"/>
</dbReference>
<dbReference type="CDD" id="cd07960">
    <property type="entry name" value="Anticodon_Ia_Ile_BEm"/>
    <property type="match status" value="1"/>
</dbReference>
<dbReference type="CDD" id="cd00818">
    <property type="entry name" value="IleRS_core"/>
    <property type="match status" value="1"/>
</dbReference>
<dbReference type="FunFam" id="1.10.730.20:FF:000001">
    <property type="entry name" value="Isoleucine--tRNA ligase"/>
    <property type="match status" value="1"/>
</dbReference>
<dbReference type="FunFam" id="3.40.50.620:FF:000152">
    <property type="entry name" value="Isoleucine--tRNA ligase"/>
    <property type="match status" value="1"/>
</dbReference>
<dbReference type="Gene3D" id="1.10.730.20">
    <property type="match status" value="1"/>
</dbReference>
<dbReference type="Gene3D" id="3.40.50.620">
    <property type="entry name" value="HUPs"/>
    <property type="match status" value="2"/>
</dbReference>
<dbReference type="Gene3D" id="1.10.10.830">
    <property type="entry name" value="Ile-tRNA synthetase CP2 domain-like"/>
    <property type="match status" value="1"/>
</dbReference>
<dbReference type="HAMAP" id="MF_02002">
    <property type="entry name" value="Ile_tRNA_synth_type1"/>
    <property type="match status" value="1"/>
</dbReference>
<dbReference type="InterPro" id="IPR001412">
    <property type="entry name" value="aa-tRNA-synth_I_CS"/>
</dbReference>
<dbReference type="InterPro" id="IPR002300">
    <property type="entry name" value="aa-tRNA-synth_Ia"/>
</dbReference>
<dbReference type="InterPro" id="IPR033708">
    <property type="entry name" value="Anticodon_Ile_BEm"/>
</dbReference>
<dbReference type="InterPro" id="IPR002301">
    <property type="entry name" value="Ile-tRNA-ligase"/>
</dbReference>
<dbReference type="InterPro" id="IPR023585">
    <property type="entry name" value="Ile-tRNA-ligase_type1"/>
</dbReference>
<dbReference type="InterPro" id="IPR050081">
    <property type="entry name" value="Ile-tRNA_ligase"/>
</dbReference>
<dbReference type="InterPro" id="IPR013155">
    <property type="entry name" value="M/V/L/I-tRNA-synth_anticd-bd"/>
</dbReference>
<dbReference type="InterPro" id="IPR014729">
    <property type="entry name" value="Rossmann-like_a/b/a_fold"/>
</dbReference>
<dbReference type="InterPro" id="IPR009080">
    <property type="entry name" value="tRNAsynth_Ia_anticodon-bd"/>
</dbReference>
<dbReference type="InterPro" id="IPR009008">
    <property type="entry name" value="Val/Leu/Ile-tRNA-synth_edit"/>
</dbReference>
<dbReference type="InterPro" id="IPR010663">
    <property type="entry name" value="Znf_FPG/IleRS"/>
</dbReference>
<dbReference type="NCBIfam" id="TIGR00392">
    <property type="entry name" value="ileS"/>
    <property type="match status" value="1"/>
</dbReference>
<dbReference type="PANTHER" id="PTHR42765:SF1">
    <property type="entry name" value="ISOLEUCINE--TRNA LIGASE, MITOCHONDRIAL"/>
    <property type="match status" value="1"/>
</dbReference>
<dbReference type="PANTHER" id="PTHR42765">
    <property type="entry name" value="SOLEUCYL-TRNA SYNTHETASE"/>
    <property type="match status" value="1"/>
</dbReference>
<dbReference type="Pfam" id="PF08264">
    <property type="entry name" value="Anticodon_1"/>
    <property type="match status" value="1"/>
</dbReference>
<dbReference type="Pfam" id="PF00133">
    <property type="entry name" value="tRNA-synt_1"/>
    <property type="match status" value="1"/>
</dbReference>
<dbReference type="Pfam" id="PF06827">
    <property type="entry name" value="zf-FPG_IleRS"/>
    <property type="match status" value="1"/>
</dbReference>
<dbReference type="PRINTS" id="PR00984">
    <property type="entry name" value="TRNASYNTHILE"/>
</dbReference>
<dbReference type="SUPFAM" id="SSF47323">
    <property type="entry name" value="Anticodon-binding domain of a subclass of class I aminoacyl-tRNA synthetases"/>
    <property type="match status" value="1"/>
</dbReference>
<dbReference type="SUPFAM" id="SSF52374">
    <property type="entry name" value="Nucleotidylyl transferase"/>
    <property type="match status" value="1"/>
</dbReference>
<dbReference type="SUPFAM" id="SSF50677">
    <property type="entry name" value="ValRS/IleRS/LeuRS editing domain"/>
    <property type="match status" value="1"/>
</dbReference>
<dbReference type="PROSITE" id="PS00178">
    <property type="entry name" value="AA_TRNA_LIGASE_I"/>
    <property type="match status" value="1"/>
</dbReference>
<keyword id="KW-0030">Aminoacyl-tRNA synthetase</keyword>
<keyword id="KW-0067">ATP-binding</keyword>
<keyword id="KW-0963">Cytoplasm</keyword>
<keyword id="KW-0436">Ligase</keyword>
<keyword id="KW-0479">Metal-binding</keyword>
<keyword id="KW-0547">Nucleotide-binding</keyword>
<keyword id="KW-0648">Protein biosynthesis</keyword>
<keyword id="KW-1185">Reference proteome</keyword>
<keyword id="KW-0862">Zinc</keyword>